<gene>
    <name type="primary">Cyp316a1</name>
    <name type="ORF">CG8540</name>
</gene>
<feature type="chain" id="PRO_0000052329" description="Probable cytochrome P450 316a1">
    <location>
        <begin position="1"/>
        <end position="484"/>
    </location>
</feature>
<feature type="binding site" description="axial binding residue" evidence="1">
    <location>
        <position position="433"/>
    </location>
    <ligand>
        <name>heme</name>
        <dbReference type="ChEBI" id="CHEBI:30413"/>
    </ligand>
    <ligandPart>
        <name>Fe</name>
        <dbReference type="ChEBI" id="CHEBI:18248"/>
    </ligandPart>
</feature>
<evidence type="ECO:0000250" key="1"/>
<evidence type="ECO:0000305" key="2"/>
<dbReference type="EC" id="1.14.-.-"/>
<dbReference type="EMBL" id="AE014296">
    <property type="protein sequence ID" value="AAF50550.3"/>
    <property type="molecule type" value="Genomic_DNA"/>
</dbReference>
<dbReference type="RefSeq" id="NP_648129.2">
    <property type="nucleotide sequence ID" value="NM_139872.2"/>
</dbReference>
<dbReference type="SMR" id="Q9VS78"/>
<dbReference type="BioGRID" id="64277">
    <property type="interactions" value="1"/>
</dbReference>
<dbReference type="DIP" id="DIP-21749N"/>
<dbReference type="FunCoup" id="Q9VS78">
    <property type="interactions" value="2"/>
</dbReference>
<dbReference type="IntAct" id="Q9VS78">
    <property type="interactions" value="1"/>
</dbReference>
<dbReference type="STRING" id="7227.FBpp0304450"/>
<dbReference type="PaxDb" id="7227-FBpp0304450"/>
<dbReference type="EnsemblMetazoa" id="FBtr0332140">
    <property type="protein sequence ID" value="FBpp0304450"/>
    <property type="gene ID" value="FBgn0035790"/>
</dbReference>
<dbReference type="GeneID" id="38840"/>
<dbReference type="KEGG" id="dme:Dmel_CG8540"/>
<dbReference type="UCSC" id="CG8540-RA">
    <property type="organism name" value="d. melanogaster"/>
</dbReference>
<dbReference type="AGR" id="FB:FBgn0035790"/>
<dbReference type="CTD" id="38840"/>
<dbReference type="FlyBase" id="FBgn0035790">
    <property type="gene designation" value="Cyp316a1"/>
</dbReference>
<dbReference type="VEuPathDB" id="VectorBase:FBgn0035790"/>
<dbReference type="eggNOG" id="KOG0157">
    <property type="taxonomic scope" value="Eukaryota"/>
</dbReference>
<dbReference type="HOGENOM" id="CLU_001570_4_1_1"/>
<dbReference type="InParanoid" id="Q9VS78"/>
<dbReference type="OMA" id="ANRFNYW"/>
<dbReference type="OrthoDB" id="1470350at2759"/>
<dbReference type="PhylomeDB" id="Q9VS78"/>
<dbReference type="Reactome" id="R-DME-193144">
    <property type="pathway name" value="Estrogen biosynthesis"/>
</dbReference>
<dbReference type="Reactome" id="R-DME-211976">
    <property type="pathway name" value="Endogenous sterols"/>
</dbReference>
<dbReference type="SignaLink" id="Q9VS78"/>
<dbReference type="BioGRID-ORCS" id="38840">
    <property type="hits" value="0 hits in 1 CRISPR screen"/>
</dbReference>
<dbReference type="GenomeRNAi" id="38840"/>
<dbReference type="PRO" id="PR:Q9VS78"/>
<dbReference type="Proteomes" id="UP000000803">
    <property type="component" value="Chromosome 3L"/>
</dbReference>
<dbReference type="Bgee" id="FBgn0035790">
    <property type="expression patterns" value="Expressed in midgut and 3 other cell types or tissues"/>
</dbReference>
<dbReference type="GO" id="GO:0005789">
    <property type="term" value="C:endoplasmic reticulum membrane"/>
    <property type="evidence" value="ECO:0007669"/>
    <property type="project" value="UniProtKB-SubCell"/>
</dbReference>
<dbReference type="GO" id="GO:0020037">
    <property type="term" value="F:heme binding"/>
    <property type="evidence" value="ECO:0007669"/>
    <property type="project" value="InterPro"/>
</dbReference>
<dbReference type="GO" id="GO:0005506">
    <property type="term" value="F:iron ion binding"/>
    <property type="evidence" value="ECO:0007669"/>
    <property type="project" value="InterPro"/>
</dbReference>
<dbReference type="GO" id="GO:0004497">
    <property type="term" value="F:monooxygenase activity"/>
    <property type="evidence" value="ECO:0007669"/>
    <property type="project" value="UniProtKB-KW"/>
</dbReference>
<dbReference type="GO" id="GO:0016705">
    <property type="term" value="F:oxidoreductase activity, acting on paired donors, with incorporation or reduction of molecular oxygen"/>
    <property type="evidence" value="ECO:0007669"/>
    <property type="project" value="InterPro"/>
</dbReference>
<dbReference type="Gene3D" id="1.10.630.10">
    <property type="entry name" value="Cytochrome P450"/>
    <property type="match status" value="1"/>
</dbReference>
<dbReference type="InterPro" id="IPR001128">
    <property type="entry name" value="Cyt_P450"/>
</dbReference>
<dbReference type="InterPro" id="IPR036396">
    <property type="entry name" value="Cyt_P450_sf"/>
</dbReference>
<dbReference type="InterPro" id="IPR050196">
    <property type="entry name" value="Cytochrome_P450_Monoox"/>
</dbReference>
<dbReference type="PANTHER" id="PTHR24291:SF189">
    <property type="entry name" value="CYTOCHROME P450 4C3-RELATED"/>
    <property type="match status" value="1"/>
</dbReference>
<dbReference type="PANTHER" id="PTHR24291">
    <property type="entry name" value="CYTOCHROME P450 FAMILY 4"/>
    <property type="match status" value="1"/>
</dbReference>
<dbReference type="Pfam" id="PF00067">
    <property type="entry name" value="p450"/>
    <property type="match status" value="1"/>
</dbReference>
<dbReference type="PRINTS" id="PR00385">
    <property type="entry name" value="P450"/>
</dbReference>
<dbReference type="SUPFAM" id="SSF48264">
    <property type="entry name" value="Cytochrome P450"/>
    <property type="match status" value="1"/>
</dbReference>
<name>CP316_DROME</name>
<sequence length="484" mass="56278">MILTATFICFCLASAFNYFRARRQRSLIKNLKGPFTWPLMGAMHKLLFLTPINFFQRSTEYLTKYGTFSRCWVFHRLFIPLADLELSRQLLENDTHLETGYELMKDWLVGGVLMCQSEQWQKRHSLISGLFDKGNLEQLIDLSRHQTEQLLQKLAKQADQKVFDIWYTVSPIVLDLMVMTTCGAKPSEEYSKNLKDLSEIYRKRFLSLQSANRFNYWLSSPFMRKRQNRLIKRLNDEHNNLMAMHQSQNQLKIENGLDIYQLRPIPLKDHKSLLEILLESKDPQLTGEEICGELNTCNYLGYQLCSPALCFCLVTIARNPSVQQKCLDELNLAQIKDQGWDLEKLNYLDAVLHETMRLYPPQVIVGRQLKKDFPYTHSIVGDAELPCGSEIYINLYELQRNEVRYPKANHFDAQRFLDSPPELLSYSLGPRCCPARKFSMQLLKTLLAPILANFEVLPYGDEVRLDLRLVLGSSNGFQLALKPR</sequence>
<reference key="1">
    <citation type="journal article" date="2000" name="Science">
        <title>The genome sequence of Drosophila melanogaster.</title>
        <authorList>
            <person name="Adams M.D."/>
            <person name="Celniker S.E."/>
            <person name="Holt R.A."/>
            <person name="Evans C.A."/>
            <person name="Gocayne J.D."/>
            <person name="Amanatides P.G."/>
            <person name="Scherer S.E."/>
            <person name="Li P.W."/>
            <person name="Hoskins R.A."/>
            <person name="Galle R.F."/>
            <person name="George R.A."/>
            <person name="Lewis S.E."/>
            <person name="Richards S."/>
            <person name="Ashburner M."/>
            <person name="Henderson S.N."/>
            <person name="Sutton G.G."/>
            <person name="Wortman J.R."/>
            <person name="Yandell M.D."/>
            <person name="Zhang Q."/>
            <person name="Chen L.X."/>
            <person name="Brandon R.C."/>
            <person name="Rogers Y.-H.C."/>
            <person name="Blazej R.G."/>
            <person name="Champe M."/>
            <person name="Pfeiffer B.D."/>
            <person name="Wan K.H."/>
            <person name="Doyle C."/>
            <person name="Baxter E.G."/>
            <person name="Helt G."/>
            <person name="Nelson C.R."/>
            <person name="Miklos G.L.G."/>
            <person name="Abril J.F."/>
            <person name="Agbayani A."/>
            <person name="An H.-J."/>
            <person name="Andrews-Pfannkoch C."/>
            <person name="Baldwin D."/>
            <person name="Ballew R.M."/>
            <person name="Basu A."/>
            <person name="Baxendale J."/>
            <person name="Bayraktaroglu L."/>
            <person name="Beasley E.M."/>
            <person name="Beeson K.Y."/>
            <person name="Benos P.V."/>
            <person name="Berman B.P."/>
            <person name="Bhandari D."/>
            <person name="Bolshakov S."/>
            <person name="Borkova D."/>
            <person name="Botchan M.R."/>
            <person name="Bouck J."/>
            <person name="Brokstein P."/>
            <person name="Brottier P."/>
            <person name="Burtis K.C."/>
            <person name="Busam D.A."/>
            <person name="Butler H."/>
            <person name="Cadieu E."/>
            <person name="Center A."/>
            <person name="Chandra I."/>
            <person name="Cherry J.M."/>
            <person name="Cawley S."/>
            <person name="Dahlke C."/>
            <person name="Davenport L.B."/>
            <person name="Davies P."/>
            <person name="de Pablos B."/>
            <person name="Delcher A."/>
            <person name="Deng Z."/>
            <person name="Mays A.D."/>
            <person name="Dew I."/>
            <person name="Dietz S.M."/>
            <person name="Dodson K."/>
            <person name="Doup L.E."/>
            <person name="Downes M."/>
            <person name="Dugan-Rocha S."/>
            <person name="Dunkov B.C."/>
            <person name="Dunn P."/>
            <person name="Durbin K.J."/>
            <person name="Evangelista C.C."/>
            <person name="Ferraz C."/>
            <person name="Ferriera S."/>
            <person name="Fleischmann W."/>
            <person name="Fosler C."/>
            <person name="Gabrielian A.E."/>
            <person name="Garg N.S."/>
            <person name="Gelbart W.M."/>
            <person name="Glasser K."/>
            <person name="Glodek A."/>
            <person name="Gong F."/>
            <person name="Gorrell J.H."/>
            <person name="Gu Z."/>
            <person name="Guan P."/>
            <person name="Harris M."/>
            <person name="Harris N.L."/>
            <person name="Harvey D.A."/>
            <person name="Heiman T.J."/>
            <person name="Hernandez J.R."/>
            <person name="Houck J."/>
            <person name="Hostin D."/>
            <person name="Houston K.A."/>
            <person name="Howland T.J."/>
            <person name="Wei M.-H."/>
            <person name="Ibegwam C."/>
            <person name="Jalali M."/>
            <person name="Kalush F."/>
            <person name="Karpen G.H."/>
            <person name="Ke Z."/>
            <person name="Kennison J.A."/>
            <person name="Ketchum K.A."/>
            <person name="Kimmel B.E."/>
            <person name="Kodira C.D."/>
            <person name="Kraft C.L."/>
            <person name="Kravitz S."/>
            <person name="Kulp D."/>
            <person name="Lai Z."/>
            <person name="Lasko P."/>
            <person name="Lei Y."/>
            <person name="Levitsky A.A."/>
            <person name="Li J.H."/>
            <person name="Li Z."/>
            <person name="Liang Y."/>
            <person name="Lin X."/>
            <person name="Liu X."/>
            <person name="Mattei B."/>
            <person name="McIntosh T.C."/>
            <person name="McLeod M.P."/>
            <person name="McPherson D."/>
            <person name="Merkulov G."/>
            <person name="Milshina N.V."/>
            <person name="Mobarry C."/>
            <person name="Morris J."/>
            <person name="Moshrefi A."/>
            <person name="Mount S.M."/>
            <person name="Moy M."/>
            <person name="Murphy B."/>
            <person name="Murphy L."/>
            <person name="Muzny D.M."/>
            <person name="Nelson D.L."/>
            <person name="Nelson D.R."/>
            <person name="Nelson K.A."/>
            <person name="Nixon K."/>
            <person name="Nusskern D.R."/>
            <person name="Pacleb J.M."/>
            <person name="Palazzolo M."/>
            <person name="Pittman G.S."/>
            <person name="Pan S."/>
            <person name="Pollard J."/>
            <person name="Puri V."/>
            <person name="Reese M.G."/>
            <person name="Reinert K."/>
            <person name="Remington K."/>
            <person name="Saunders R.D.C."/>
            <person name="Scheeler F."/>
            <person name="Shen H."/>
            <person name="Shue B.C."/>
            <person name="Siden-Kiamos I."/>
            <person name="Simpson M."/>
            <person name="Skupski M.P."/>
            <person name="Smith T.J."/>
            <person name="Spier E."/>
            <person name="Spradling A.C."/>
            <person name="Stapleton M."/>
            <person name="Strong R."/>
            <person name="Sun E."/>
            <person name="Svirskas R."/>
            <person name="Tector C."/>
            <person name="Turner R."/>
            <person name="Venter E."/>
            <person name="Wang A.H."/>
            <person name="Wang X."/>
            <person name="Wang Z.-Y."/>
            <person name="Wassarman D.A."/>
            <person name="Weinstock G.M."/>
            <person name="Weissenbach J."/>
            <person name="Williams S.M."/>
            <person name="Woodage T."/>
            <person name="Worley K.C."/>
            <person name="Wu D."/>
            <person name="Yang S."/>
            <person name="Yao Q.A."/>
            <person name="Ye J."/>
            <person name="Yeh R.-F."/>
            <person name="Zaveri J.S."/>
            <person name="Zhan M."/>
            <person name="Zhang G."/>
            <person name="Zhao Q."/>
            <person name="Zheng L."/>
            <person name="Zheng X.H."/>
            <person name="Zhong F.N."/>
            <person name="Zhong W."/>
            <person name="Zhou X."/>
            <person name="Zhu S.C."/>
            <person name="Zhu X."/>
            <person name="Smith H.O."/>
            <person name="Gibbs R.A."/>
            <person name="Myers E.W."/>
            <person name="Rubin G.M."/>
            <person name="Venter J.C."/>
        </authorList>
    </citation>
    <scope>NUCLEOTIDE SEQUENCE [LARGE SCALE GENOMIC DNA]</scope>
    <source>
        <strain>Berkeley</strain>
    </source>
</reference>
<reference key="2">
    <citation type="journal article" date="2002" name="Genome Biol.">
        <title>Annotation of the Drosophila melanogaster euchromatic genome: a systematic review.</title>
        <authorList>
            <person name="Misra S."/>
            <person name="Crosby M.A."/>
            <person name="Mungall C.J."/>
            <person name="Matthews B.B."/>
            <person name="Campbell K.S."/>
            <person name="Hradecky P."/>
            <person name="Huang Y."/>
            <person name="Kaminker J.S."/>
            <person name="Millburn G.H."/>
            <person name="Prochnik S.E."/>
            <person name="Smith C.D."/>
            <person name="Tupy J.L."/>
            <person name="Whitfield E.J."/>
            <person name="Bayraktaroglu L."/>
            <person name="Berman B.P."/>
            <person name="Bettencourt B.R."/>
            <person name="Celniker S.E."/>
            <person name="de Grey A.D.N.J."/>
            <person name="Drysdale R.A."/>
            <person name="Harris N.L."/>
            <person name="Richter J."/>
            <person name="Russo S."/>
            <person name="Schroeder A.J."/>
            <person name="Shu S.Q."/>
            <person name="Stapleton M."/>
            <person name="Yamada C."/>
            <person name="Ashburner M."/>
            <person name="Gelbart W.M."/>
            <person name="Rubin G.M."/>
            <person name="Lewis S.E."/>
        </authorList>
    </citation>
    <scope>GENOME REANNOTATION</scope>
    <source>
        <strain>Berkeley</strain>
    </source>
</reference>
<keyword id="KW-0256">Endoplasmic reticulum</keyword>
<keyword id="KW-0349">Heme</keyword>
<keyword id="KW-0408">Iron</keyword>
<keyword id="KW-0472">Membrane</keyword>
<keyword id="KW-0479">Metal-binding</keyword>
<keyword id="KW-0492">Microsome</keyword>
<keyword id="KW-0503">Monooxygenase</keyword>
<keyword id="KW-0560">Oxidoreductase</keyword>
<keyword id="KW-1185">Reference proteome</keyword>
<organism>
    <name type="scientific">Drosophila melanogaster</name>
    <name type="common">Fruit fly</name>
    <dbReference type="NCBI Taxonomy" id="7227"/>
    <lineage>
        <taxon>Eukaryota</taxon>
        <taxon>Metazoa</taxon>
        <taxon>Ecdysozoa</taxon>
        <taxon>Arthropoda</taxon>
        <taxon>Hexapoda</taxon>
        <taxon>Insecta</taxon>
        <taxon>Pterygota</taxon>
        <taxon>Neoptera</taxon>
        <taxon>Endopterygota</taxon>
        <taxon>Diptera</taxon>
        <taxon>Brachycera</taxon>
        <taxon>Muscomorpha</taxon>
        <taxon>Ephydroidea</taxon>
        <taxon>Drosophilidae</taxon>
        <taxon>Drosophila</taxon>
        <taxon>Sophophora</taxon>
    </lineage>
</organism>
<protein>
    <recommendedName>
        <fullName>Probable cytochrome P450 316a1</fullName>
        <ecNumber>1.14.-.-</ecNumber>
    </recommendedName>
    <alternativeName>
        <fullName>CYPCCCXVIA1</fullName>
    </alternativeName>
</protein>
<proteinExistence type="inferred from homology"/>
<comment type="function">
    <text evidence="1">May be involved in the metabolism of insect hormones and in the breakdown of synthetic insecticides.</text>
</comment>
<comment type="cofactor">
    <cofactor evidence="1">
        <name>heme</name>
        <dbReference type="ChEBI" id="CHEBI:30413"/>
    </cofactor>
</comment>
<comment type="subcellular location">
    <subcellularLocation>
        <location evidence="2">Endoplasmic reticulum membrane</location>
        <topology evidence="2">Peripheral membrane protein</topology>
    </subcellularLocation>
    <subcellularLocation>
        <location evidence="2">Microsome membrane</location>
        <topology evidence="2">Peripheral membrane protein</topology>
    </subcellularLocation>
</comment>
<comment type="similarity">
    <text evidence="2">Belongs to the cytochrome P450 family.</text>
</comment>
<accession>Q9VS78</accession>